<reference key="1">
    <citation type="journal article" date="2002" name="Proc. Natl. Acad. Sci. U.S.A.">
        <title>Complete genome sequence of Clostridium perfringens, an anaerobic flesh-eater.</title>
        <authorList>
            <person name="Shimizu T."/>
            <person name="Ohtani K."/>
            <person name="Hirakawa H."/>
            <person name="Ohshima K."/>
            <person name="Yamashita A."/>
            <person name="Shiba T."/>
            <person name="Ogasawara N."/>
            <person name="Hattori M."/>
            <person name="Kuhara S."/>
            <person name="Hayashi H."/>
        </authorList>
    </citation>
    <scope>NUCLEOTIDE SEQUENCE [LARGE SCALE GENOMIC DNA]</scope>
    <source>
        <strain>13 / Type A</strain>
    </source>
</reference>
<proteinExistence type="inferred from homology"/>
<protein>
    <recommendedName>
        <fullName evidence="1">Glutamyl-tRNA reductase</fullName>
        <shortName evidence="1">GluTR</shortName>
        <ecNumber evidence="1">1.2.1.70</ecNumber>
    </recommendedName>
</protein>
<organism>
    <name type="scientific">Clostridium perfringens (strain 13 / Type A)</name>
    <dbReference type="NCBI Taxonomy" id="195102"/>
    <lineage>
        <taxon>Bacteria</taxon>
        <taxon>Bacillati</taxon>
        <taxon>Bacillota</taxon>
        <taxon>Clostridia</taxon>
        <taxon>Eubacteriales</taxon>
        <taxon>Clostridiaceae</taxon>
        <taxon>Clostridium</taxon>
    </lineage>
</organism>
<feature type="chain" id="PRO_0000114013" description="Glutamyl-tRNA reductase">
    <location>
        <begin position="1"/>
        <end position="400"/>
    </location>
</feature>
<feature type="active site" description="Nucleophile" evidence="1">
    <location>
        <position position="46"/>
    </location>
</feature>
<feature type="binding site" evidence="1">
    <location>
        <begin position="45"/>
        <end position="48"/>
    </location>
    <ligand>
        <name>substrate</name>
    </ligand>
</feature>
<feature type="binding site" evidence="1">
    <location>
        <position position="103"/>
    </location>
    <ligand>
        <name>substrate</name>
    </ligand>
</feature>
<feature type="binding site" evidence="1">
    <location>
        <begin position="108"/>
        <end position="110"/>
    </location>
    <ligand>
        <name>substrate</name>
    </ligand>
</feature>
<feature type="binding site" evidence="1">
    <location>
        <position position="114"/>
    </location>
    <ligand>
        <name>substrate</name>
    </ligand>
</feature>
<feature type="binding site" evidence="1">
    <location>
        <begin position="179"/>
        <end position="184"/>
    </location>
    <ligand>
        <name>NADP(+)</name>
        <dbReference type="ChEBI" id="CHEBI:58349"/>
    </ligand>
</feature>
<feature type="site" description="Important for activity" evidence="1">
    <location>
        <position position="93"/>
    </location>
</feature>
<keyword id="KW-0521">NADP</keyword>
<keyword id="KW-0560">Oxidoreductase</keyword>
<keyword id="KW-0627">Porphyrin biosynthesis</keyword>
<keyword id="KW-1185">Reference proteome</keyword>
<name>HEM1_CLOPE</name>
<evidence type="ECO:0000255" key="1">
    <source>
        <dbReference type="HAMAP-Rule" id="MF_00087"/>
    </source>
</evidence>
<dbReference type="EC" id="1.2.1.70" evidence="1"/>
<dbReference type="EMBL" id="BA000016">
    <property type="protein sequence ID" value="BAB81143.1"/>
    <property type="molecule type" value="Genomic_DNA"/>
</dbReference>
<dbReference type="RefSeq" id="WP_011010446.1">
    <property type="nucleotide sequence ID" value="NC_003366.1"/>
</dbReference>
<dbReference type="SMR" id="P0C2E3"/>
<dbReference type="STRING" id="195102.gene:10490701"/>
<dbReference type="KEGG" id="cpe:CPE1437"/>
<dbReference type="HOGENOM" id="CLU_035113_1_0_9"/>
<dbReference type="UniPathway" id="UPA00251">
    <property type="reaction ID" value="UER00316"/>
</dbReference>
<dbReference type="Proteomes" id="UP000000818">
    <property type="component" value="Chromosome"/>
</dbReference>
<dbReference type="GO" id="GO:0008883">
    <property type="term" value="F:glutamyl-tRNA reductase activity"/>
    <property type="evidence" value="ECO:0007669"/>
    <property type="project" value="UniProtKB-UniRule"/>
</dbReference>
<dbReference type="GO" id="GO:0050661">
    <property type="term" value="F:NADP binding"/>
    <property type="evidence" value="ECO:0007669"/>
    <property type="project" value="InterPro"/>
</dbReference>
<dbReference type="GO" id="GO:0019353">
    <property type="term" value="P:protoporphyrinogen IX biosynthetic process from glutamate"/>
    <property type="evidence" value="ECO:0007669"/>
    <property type="project" value="TreeGrafter"/>
</dbReference>
<dbReference type="FunFam" id="3.30.460.30:FF:000001">
    <property type="entry name" value="Glutamyl-tRNA reductase"/>
    <property type="match status" value="1"/>
</dbReference>
<dbReference type="Gene3D" id="3.30.460.30">
    <property type="entry name" value="Glutamyl-tRNA reductase, N-terminal domain"/>
    <property type="match status" value="1"/>
</dbReference>
<dbReference type="Gene3D" id="3.40.50.720">
    <property type="entry name" value="NAD(P)-binding Rossmann-like Domain"/>
    <property type="match status" value="1"/>
</dbReference>
<dbReference type="HAMAP" id="MF_00087">
    <property type="entry name" value="Glu_tRNA_reductase"/>
    <property type="match status" value="1"/>
</dbReference>
<dbReference type="InterPro" id="IPR000343">
    <property type="entry name" value="4pyrrol_synth_GluRdtase"/>
</dbReference>
<dbReference type="InterPro" id="IPR015896">
    <property type="entry name" value="4pyrrol_synth_GluRdtase_dimer"/>
</dbReference>
<dbReference type="InterPro" id="IPR015895">
    <property type="entry name" value="4pyrrol_synth_GluRdtase_N"/>
</dbReference>
<dbReference type="InterPro" id="IPR018214">
    <property type="entry name" value="GluRdtase_CS"/>
</dbReference>
<dbReference type="InterPro" id="IPR036343">
    <property type="entry name" value="GluRdtase_N_sf"/>
</dbReference>
<dbReference type="InterPro" id="IPR036291">
    <property type="entry name" value="NAD(P)-bd_dom_sf"/>
</dbReference>
<dbReference type="InterPro" id="IPR006151">
    <property type="entry name" value="Shikm_DH/Glu-tRNA_Rdtase"/>
</dbReference>
<dbReference type="NCBIfam" id="TIGR01035">
    <property type="entry name" value="hemA"/>
    <property type="match status" value="1"/>
</dbReference>
<dbReference type="PANTHER" id="PTHR43013">
    <property type="entry name" value="GLUTAMYL-TRNA REDUCTASE"/>
    <property type="match status" value="1"/>
</dbReference>
<dbReference type="PANTHER" id="PTHR43013:SF1">
    <property type="entry name" value="GLUTAMYL-TRNA REDUCTASE"/>
    <property type="match status" value="1"/>
</dbReference>
<dbReference type="Pfam" id="PF00745">
    <property type="entry name" value="GlutR_dimer"/>
    <property type="match status" value="1"/>
</dbReference>
<dbReference type="Pfam" id="PF05201">
    <property type="entry name" value="GlutR_N"/>
    <property type="match status" value="1"/>
</dbReference>
<dbReference type="Pfam" id="PF01488">
    <property type="entry name" value="Shikimate_DH"/>
    <property type="match status" value="1"/>
</dbReference>
<dbReference type="PIRSF" id="PIRSF000445">
    <property type="entry name" value="4pyrrol_synth_GluRdtase"/>
    <property type="match status" value="1"/>
</dbReference>
<dbReference type="SUPFAM" id="SSF69742">
    <property type="entry name" value="Glutamyl tRNA-reductase catalytic, N-terminal domain"/>
    <property type="match status" value="1"/>
</dbReference>
<dbReference type="SUPFAM" id="SSF51735">
    <property type="entry name" value="NAD(P)-binding Rossmann-fold domains"/>
    <property type="match status" value="1"/>
</dbReference>
<dbReference type="PROSITE" id="PS00747">
    <property type="entry name" value="GLUTR"/>
    <property type="match status" value="1"/>
</dbReference>
<sequence length="400" mass="45890">MIGVIGVKRNVDIAIREKLALYPKKHKKYVGELLNSFKEVVILNTCNRTEIYFNCTEEISEDEIFDKIFNVFNWNDDLKKYMFLSKEKRAVTHLMEVICGFHSRILGEDQILGQIKDAYKTAISDNSISSELQKMFEIAIACGKKFKTECKMFEVPVSSVSISINSALLKGCRKFMVLGYGEIGKLAIKHLLSHKVECIYLIVRDKSKASDLEGEIVEVLDFNEKNQVINEVDCIVSCTAAPHTVVRNEDIKTEGDIIHIYDLAVPRDVDKELSEKERVILKDIDEISKIDDKNKKIRKERMEEYKHIVEESIEEFLNWLKIREVSSKIRNIKIRENEICSERIKTFSNKGNGENAKLAERMIKSTADAYVNRAIELLKSEALKGSDSSCAEIIEKIFLT</sequence>
<accession>P0C2E3</accession>
<accession>Q9ZND3</accession>
<comment type="function">
    <text evidence="1">Catalyzes the NADPH-dependent reduction of glutamyl-tRNA(Glu) to glutamate 1-semialdehyde (GSA).</text>
</comment>
<comment type="catalytic activity">
    <reaction evidence="1">
        <text>(S)-4-amino-5-oxopentanoate + tRNA(Glu) + NADP(+) = L-glutamyl-tRNA(Glu) + NADPH + H(+)</text>
        <dbReference type="Rhea" id="RHEA:12344"/>
        <dbReference type="Rhea" id="RHEA-COMP:9663"/>
        <dbReference type="Rhea" id="RHEA-COMP:9680"/>
        <dbReference type="ChEBI" id="CHEBI:15378"/>
        <dbReference type="ChEBI" id="CHEBI:57501"/>
        <dbReference type="ChEBI" id="CHEBI:57783"/>
        <dbReference type="ChEBI" id="CHEBI:58349"/>
        <dbReference type="ChEBI" id="CHEBI:78442"/>
        <dbReference type="ChEBI" id="CHEBI:78520"/>
        <dbReference type="EC" id="1.2.1.70"/>
    </reaction>
</comment>
<comment type="pathway">
    <text evidence="1">Porphyrin-containing compound metabolism; protoporphyrin-IX biosynthesis; 5-aminolevulinate from L-glutamyl-tRNA(Glu): step 1/2.</text>
</comment>
<comment type="subunit">
    <text evidence="1">Homodimer.</text>
</comment>
<comment type="domain">
    <text evidence="1">Possesses an unusual extended V-shaped dimeric structure with each monomer consisting of three distinct domains arranged along a curved 'spinal' alpha-helix. The N-terminal catalytic domain specifically recognizes the glutamate moiety of the substrate. The second domain is the NADPH-binding domain, and the third C-terminal domain is responsible for dimerization.</text>
</comment>
<comment type="miscellaneous">
    <text evidence="1">During catalysis, the active site Cys acts as a nucleophile attacking the alpha-carbonyl group of tRNA-bound glutamate with the formation of a thioester intermediate between enzyme and glutamate, and the concomitant release of tRNA(Glu). The thioester intermediate is finally reduced by direct hydride transfer from NADPH, to form the product GSA.</text>
</comment>
<comment type="similarity">
    <text evidence="1">Belongs to the glutamyl-tRNA reductase family.</text>
</comment>
<gene>
    <name evidence="1" type="primary">hemA</name>
    <name type="ordered locus">CPE1437</name>
</gene>